<name>TVP23_DEBHA</name>
<evidence type="ECO:0000250" key="1"/>
<evidence type="ECO:0000255" key="2"/>
<evidence type="ECO:0000256" key="3">
    <source>
        <dbReference type="SAM" id="MobiDB-lite"/>
    </source>
</evidence>
<evidence type="ECO:0000305" key="4"/>
<organism>
    <name type="scientific">Debaryomyces hansenii (strain ATCC 36239 / CBS 767 / BCRC 21394 / JCM 1990 / NBRC 0083 / IGC 2968)</name>
    <name type="common">Yeast</name>
    <name type="synonym">Torulaspora hansenii</name>
    <dbReference type="NCBI Taxonomy" id="284592"/>
    <lineage>
        <taxon>Eukaryota</taxon>
        <taxon>Fungi</taxon>
        <taxon>Dikarya</taxon>
        <taxon>Ascomycota</taxon>
        <taxon>Saccharomycotina</taxon>
        <taxon>Pichiomycetes</taxon>
        <taxon>Debaryomycetaceae</taxon>
        <taxon>Debaryomyces</taxon>
    </lineage>
</organism>
<feature type="chain" id="PRO_0000343046" description="Golgi apparatus membrane protein TVP23">
    <location>
        <begin position="1"/>
        <end position="227"/>
    </location>
</feature>
<feature type="transmembrane region" description="Helical" evidence="2">
    <location>
        <begin position="56"/>
        <end position="76"/>
    </location>
</feature>
<feature type="transmembrane region" description="Helical" evidence="2">
    <location>
        <begin position="83"/>
        <end position="103"/>
    </location>
</feature>
<feature type="transmembrane region" description="Helical" evidence="2">
    <location>
        <begin position="149"/>
        <end position="168"/>
    </location>
</feature>
<feature type="transmembrane region" description="Helical" evidence="2">
    <location>
        <begin position="172"/>
        <end position="194"/>
    </location>
</feature>
<feature type="region of interest" description="Disordered" evidence="3">
    <location>
        <begin position="8"/>
        <end position="32"/>
    </location>
</feature>
<feature type="compositionally biased region" description="Polar residues" evidence="3">
    <location>
        <begin position="15"/>
        <end position="32"/>
    </location>
</feature>
<feature type="glycosylation site" description="N-linked (GlcNAc...) asparagine" evidence="2">
    <location>
        <position position="24"/>
    </location>
</feature>
<proteinExistence type="inferred from homology"/>
<comment type="function">
    <text evidence="1">Golgi membrane protein involved in vesicular trafficking.</text>
</comment>
<comment type="subcellular location">
    <subcellularLocation>
        <location evidence="1">Golgi apparatus membrane</location>
        <topology evidence="1">Multi-pass membrane protein</topology>
    </subcellularLocation>
</comment>
<comment type="similarity">
    <text evidence="4">Belongs to the TVP23 family.</text>
</comment>
<sequence length="227" mass="25696">MNSAYTAIESDVPEQAQQPSAQSNATSAGANVSPSEWTWSQKLKESSHPIALLFYIFFRVSPLFIYLFGTLLIGIITKKNKFILHFIIIVLLVSGDFWNLKNIAGRLLVGLRWWNEVSVIKSTNGEFENVWVFETVDPNRYINPIDSKVFWTLLYVQPAAWVVLGFLALLKFEFLYLLLIIISISLSLTNAMAFTKCDKFGKANHLATDIFSRATGNLFSRLNPFST</sequence>
<keyword id="KW-0325">Glycoprotein</keyword>
<keyword id="KW-0333">Golgi apparatus</keyword>
<keyword id="KW-0472">Membrane</keyword>
<keyword id="KW-1185">Reference proteome</keyword>
<keyword id="KW-0812">Transmembrane</keyword>
<keyword id="KW-1133">Transmembrane helix</keyword>
<protein>
    <recommendedName>
        <fullName>Golgi apparatus membrane protein TVP23</fullName>
    </recommendedName>
</protein>
<dbReference type="EMBL" id="CR382135">
    <property type="protein sequence ID" value="CAG85838.1"/>
    <property type="molecule type" value="Genomic_DNA"/>
</dbReference>
<dbReference type="RefSeq" id="XP_457798.1">
    <property type="nucleotide sequence ID" value="XM_457798.1"/>
</dbReference>
<dbReference type="FunCoup" id="Q6BVH1">
    <property type="interactions" value="415"/>
</dbReference>
<dbReference type="STRING" id="284592.Q6BVH1"/>
<dbReference type="GlyCosmos" id="Q6BVH1">
    <property type="glycosylation" value="1 site, No reported glycans"/>
</dbReference>
<dbReference type="GeneID" id="2900030"/>
<dbReference type="KEGG" id="dha:DEHA2C02728g"/>
<dbReference type="VEuPathDB" id="FungiDB:DEHA2C02728g"/>
<dbReference type="eggNOG" id="KOG3195">
    <property type="taxonomic scope" value="Eukaryota"/>
</dbReference>
<dbReference type="HOGENOM" id="CLU_074845_0_0_1"/>
<dbReference type="InParanoid" id="Q6BVH1"/>
<dbReference type="OMA" id="KMIWWID"/>
<dbReference type="OrthoDB" id="2151161at2759"/>
<dbReference type="Proteomes" id="UP000000599">
    <property type="component" value="Chromosome C"/>
</dbReference>
<dbReference type="GO" id="GO:0000139">
    <property type="term" value="C:Golgi membrane"/>
    <property type="evidence" value="ECO:0007669"/>
    <property type="project" value="UniProtKB-SubCell"/>
</dbReference>
<dbReference type="GO" id="GO:0009306">
    <property type="term" value="P:protein secretion"/>
    <property type="evidence" value="ECO:0007669"/>
    <property type="project" value="TreeGrafter"/>
</dbReference>
<dbReference type="GO" id="GO:0016192">
    <property type="term" value="P:vesicle-mediated transport"/>
    <property type="evidence" value="ECO:0007669"/>
    <property type="project" value="TreeGrafter"/>
</dbReference>
<dbReference type="InterPro" id="IPR008564">
    <property type="entry name" value="TVP23-like"/>
</dbReference>
<dbReference type="PANTHER" id="PTHR13019">
    <property type="entry name" value="GOLGI APPARATUS MEMBRANE PROTEIN TVP23"/>
    <property type="match status" value="1"/>
</dbReference>
<dbReference type="PANTHER" id="PTHR13019:SF7">
    <property type="entry name" value="GOLGI APPARATUS MEMBRANE PROTEIN TVP23"/>
    <property type="match status" value="1"/>
</dbReference>
<dbReference type="Pfam" id="PF05832">
    <property type="entry name" value="DUF846"/>
    <property type="match status" value="1"/>
</dbReference>
<gene>
    <name type="primary">TVP23</name>
    <name type="ordered locus">DEHA2C02728g</name>
</gene>
<accession>Q6BVH1</accession>
<reference key="1">
    <citation type="journal article" date="2004" name="Nature">
        <title>Genome evolution in yeasts.</title>
        <authorList>
            <person name="Dujon B."/>
            <person name="Sherman D."/>
            <person name="Fischer G."/>
            <person name="Durrens P."/>
            <person name="Casaregola S."/>
            <person name="Lafontaine I."/>
            <person name="de Montigny J."/>
            <person name="Marck C."/>
            <person name="Neuveglise C."/>
            <person name="Talla E."/>
            <person name="Goffard N."/>
            <person name="Frangeul L."/>
            <person name="Aigle M."/>
            <person name="Anthouard V."/>
            <person name="Babour A."/>
            <person name="Barbe V."/>
            <person name="Barnay S."/>
            <person name="Blanchin S."/>
            <person name="Beckerich J.-M."/>
            <person name="Beyne E."/>
            <person name="Bleykasten C."/>
            <person name="Boisrame A."/>
            <person name="Boyer J."/>
            <person name="Cattolico L."/>
            <person name="Confanioleri F."/>
            <person name="de Daruvar A."/>
            <person name="Despons L."/>
            <person name="Fabre E."/>
            <person name="Fairhead C."/>
            <person name="Ferry-Dumazet H."/>
            <person name="Groppi A."/>
            <person name="Hantraye F."/>
            <person name="Hennequin C."/>
            <person name="Jauniaux N."/>
            <person name="Joyet P."/>
            <person name="Kachouri R."/>
            <person name="Kerrest A."/>
            <person name="Koszul R."/>
            <person name="Lemaire M."/>
            <person name="Lesur I."/>
            <person name="Ma L."/>
            <person name="Muller H."/>
            <person name="Nicaud J.-M."/>
            <person name="Nikolski M."/>
            <person name="Oztas S."/>
            <person name="Ozier-Kalogeropoulos O."/>
            <person name="Pellenz S."/>
            <person name="Potier S."/>
            <person name="Richard G.-F."/>
            <person name="Straub M.-L."/>
            <person name="Suleau A."/>
            <person name="Swennen D."/>
            <person name="Tekaia F."/>
            <person name="Wesolowski-Louvel M."/>
            <person name="Westhof E."/>
            <person name="Wirth B."/>
            <person name="Zeniou-Meyer M."/>
            <person name="Zivanovic Y."/>
            <person name="Bolotin-Fukuhara M."/>
            <person name="Thierry A."/>
            <person name="Bouchier C."/>
            <person name="Caudron B."/>
            <person name="Scarpelli C."/>
            <person name="Gaillardin C."/>
            <person name="Weissenbach J."/>
            <person name="Wincker P."/>
            <person name="Souciet J.-L."/>
        </authorList>
    </citation>
    <scope>NUCLEOTIDE SEQUENCE [LARGE SCALE GENOMIC DNA]</scope>
    <source>
        <strain>ATCC 36239 / CBS 767 / BCRC 21394 / JCM 1990 / NBRC 0083 / IGC 2968</strain>
    </source>
</reference>